<comment type="function">
    <text evidence="2">Cell surface receptor that plays a role in the regulation of IL-13-mediated responses. Functions as a decoy receptor that inhibits IL-13- and IL-4-mediated signal transduction via the JAK-STAT pathway and thereby modulates immune responses and inflammation. Serves as a functional signaling receptor for IL-13 in an alternative pathway involving AP-1 ultimately leading to the production of TGFB1.</text>
</comment>
<comment type="subunit">
    <text evidence="2">Interacts with IL4RA. Interacts with high affinity to interleukin-13 (IL13), but not to interleukin-4 (IL4).</text>
</comment>
<comment type="subcellular location">
    <subcellularLocation>
        <location evidence="2">Cell membrane</location>
        <topology evidence="2">Single-pass type I membrane protein</topology>
    </subcellularLocation>
</comment>
<comment type="tissue specificity">
    <text evidence="5">Expressed in kidney, placenta, liver, skeletal muscle and thymus. Expression was not seen in whole blood and heart.</text>
</comment>
<comment type="domain">
    <text evidence="2">The WSXWS motif appears to be necessary for proper protein folding and thereby efficient intracellular transport and cell-surface receptor binding. The cytoplasmic domain functions as an inhibitor of IL-4 or IL-13-dependent activation of the Jak-Stat pathway.</text>
</comment>
<comment type="PTM">
    <text evidence="2">Cleaved by MMP8 leading to a soluble form that is also able to interact with IL13.</text>
</comment>
<comment type="similarity">
    <text evidence="6">Belongs to the type I cytokine receptor family. Type 5 subfamily.</text>
</comment>
<accession>Q95LF0</accession>
<accession>Q3HTU7</accession>
<proteinExistence type="evidence at transcript level"/>
<reference key="1">
    <citation type="journal article" date="2001" name="Vet. Immunol. Immunopathol.">
        <title>Molecular cloning of canine IL-13 receptor alpha chain (alpha1 and alpha2) cDNAs and detection of corresponding mRNAs in canine tissues.</title>
        <authorList>
            <person name="Tang L."/>
        </authorList>
    </citation>
    <scope>NUCLEOTIDE SEQUENCE [MRNA]</scope>
    <scope>TISSUE SPECIFICITY</scope>
</reference>
<reference key="2">
    <citation type="journal article" date="2006" name="Vet. Immunol. Immunopathol.">
        <title>Immunopathogenic pathways in canine inflammatory myopathies resemble human myositis.</title>
        <authorList>
            <person name="Shelton G.D."/>
            <person name="Hoffman E.P."/>
            <person name="Ghimbovschi S."/>
            <person name="Peters I.R."/>
            <person name="Day M.J."/>
            <person name="Mullins M."/>
            <person name="Moore P.F."/>
            <person name="Nagaraju K."/>
        </authorList>
    </citation>
    <scope>NUCLEOTIDE SEQUENCE [MRNA]</scope>
</reference>
<organism>
    <name type="scientific">Canis lupus familiaris</name>
    <name type="common">Dog</name>
    <name type="synonym">Canis familiaris</name>
    <dbReference type="NCBI Taxonomy" id="9615"/>
    <lineage>
        <taxon>Eukaryota</taxon>
        <taxon>Metazoa</taxon>
        <taxon>Chordata</taxon>
        <taxon>Craniata</taxon>
        <taxon>Vertebrata</taxon>
        <taxon>Euteleostomi</taxon>
        <taxon>Mammalia</taxon>
        <taxon>Eutheria</taxon>
        <taxon>Laurasiatheria</taxon>
        <taxon>Carnivora</taxon>
        <taxon>Caniformia</taxon>
        <taxon>Canidae</taxon>
        <taxon>Canis</taxon>
    </lineage>
</organism>
<dbReference type="EMBL" id="AF314533">
    <property type="protein sequence ID" value="AAL14887.1"/>
    <property type="molecule type" value="mRNA"/>
</dbReference>
<dbReference type="EMBL" id="DQ195087">
    <property type="protein sequence ID" value="ABA40744.1"/>
    <property type="molecule type" value="mRNA"/>
</dbReference>
<dbReference type="RefSeq" id="NP_001003075.1">
    <property type="nucleotide sequence ID" value="NM_001003075.2"/>
</dbReference>
<dbReference type="RefSeq" id="XP_038304731.1">
    <property type="nucleotide sequence ID" value="XM_038448803.1"/>
</dbReference>
<dbReference type="SMR" id="Q95LF0"/>
<dbReference type="FunCoup" id="Q95LF0">
    <property type="interactions" value="36"/>
</dbReference>
<dbReference type="STRING" id="9615.ENSCAFP00000056821"/>
<dbReference type="GlyCosmos" id="Q95LF0">
    <property type="glycosylation" value="3 sites, No reported glycans"/>
</dbReference>
<dbReference type="PaxDb" id="9612-ENSCAFP00000026935"/>
<dbReference type="Ensembl" id="ENSCAFT00030029038.1">
    <property type="protein sequence ID" value="ENSCAFP00030025314.1"/>
    <property type="gene ID" value="ENSCAFG00030015759.1"/>
</dbReference>
<dbReference type="Ensembl" id="ENSCAFT00040029968.1">
    <property type="protein sequence ID" value="ENSCAFP00040026037.1"/>
    <property type="gene ID" value="ENSCAFG00040016209.1"/>
</dbReference>
<dbReference type="GeneID" id="403622"/>
<dbReference type="KEGG" id="cfa:403622"/>
<dbReference type="CTD" id="3598"/>
<dbReference type="eggNOG" id="ENOG502RV4W">
    <property type="taxonomic scope" value="Eukaryota"/>
</dbReference>
<dbReference type="HOGENOM" id="CLU_054773_1_0_1"/>
<dbReference type="InParanoid" id="Q95LF0"/>
<dbReference type="OMA" id="GPIPSQC"/>
<dbReference type="OrthoDB" id="9826641at2759"/>
<dbReference type="TreeFam" id="TF331549"/>
<dbReference type="Reactome" id="R-CFA-6785807">
    <property type="pathway name" value="Interleukin-4 and Interleukin-13 signaling"/>
</dbReference>
<dbReference type="Proteomes" id="UP000002254">
    <property type="component" value="Unplaced"/>
</dbReference>
<dbReference type="Proteomes" id="UP000694429">
    <property type="component" value="Unassembled WGS sequence"/>
</dbReference>
<dbReference type="Proteomes" id="UP000694542">
    <property type="component" value="Chromosome X"/>
</dbReference>
<dbReference type="Proteomes" id="UP000805418">
    <property type="component" value="Unplaced"/>
</dbReference>
<dbReference type="Bgee" id="ENSCAFG00000018230">
    <property type="expression patterns" value="Expressed in retina and 40 other cell types or tissues"/>
</dbReference>
<dbReference type="GO" id="GO:0009897">
    <property type="term" value="C:external side of plasma membrane"/>
    <property type="evidence" value="ECO:0000318"/>
    <property type="project" value="GO_Central"/>
</dbReference>
<dbReference type="GO" id="GO:0043235">
    <property type="term" value="C:receptor complex"/>
    <property type="evidence" value="ECO:0000318"/>
    <property type="project" value="GO_Central"/>
</dbReference>
<dbReference type="GO" id="GO:0019955">
    <property type="term" value="F:cytokine binding"/>
    <property type="evidence" value="ECO:0000318"/>
    <property type="project" value="GO_Central"/>
</dbReference>
<dbReference type="GO" id="GO:0004896">
    <property type="term" value="F:cytokine receptor activity"/>
    <property type="evidence" value="ECO:0000318"/>
    <property type="project" value="GO_Central"/>
</dbReference>
<dbReference type="GO" id="GO:0019221">
    <property type="term" value="P:cytokine-mediated signaling pathway"/>
    <property type="evidence" value="ECO:0000318"/>
    <property type="project" value="GO_Central"/>
</dbReference>
<dbReference type="GO" id="GO:0008284">
    <property type="term" value="P:positive regulation of cell population proliferation"/>
    <property type="evidence" value="ECO:0000318"/>
    <property type="project" value="GO_Central"/>
</dbReference>
<dbReference type="CDD" id="cd00063">
    <property type="entry name" value="FN3"/>
    <property type="match status" value="1"/>
</dbReference>
<dbReference type="FunFam" id="2.60.40.10:FF:001186">
    <property type="entry name" value="Interleukin 13 receptor subunit alpha 2"/>
    <property type="match status" value="1"/>
</dbReference>
<dbReference type="FunFam" id="2.60.40.10:FF:001396">
    <property type="entry name" value="Interleukin 13 receptor subunit alpha 2"/>
    <property type="match status" value="1"/>
</dbReference>
<dbReference type="FunFam" id="2.60.40.10:FF:000958">
    <property type="entry name" value="Interleukin-13 receptor subunit alpha-2"/>
    <property type="match status" value="1"/>
</dbReference>
<dbReference type="Gene3D" id="2.60.40.10">
    <property type="entry name" value="Immunoglobulins"/>
    <property type="match status" value="3"/>
</dbReference>
<dbReference type="InterPro" id="IPR003961">
    <property type="entry name" value="FN3_dom"/>
</dbReference>
<dbReference type="InterPro" id="IPR036116">
    <property type="entry name" value="FN3_sf"/>
</dbReference>
<dbReference type="InterPro" id="IPR013783">
    <property type="entry name" value="Ig-like_fold"/>
</dbReference>
<dbReference type="InterPro" id="IPR003532">
    <property type="entry name" value="Short_hematopoietin_rcpt_2_CS"/>
</dbReference>
<dbReference type="InterPro" id="IPR015321">
    <property type="entry name" value="TypeI_recpt_CBD"/>
</dbReference>
<dbReference type="PANTHER" id="PTHR23037">
    <property type="entry name" value="CYTOKINE RECEPTOR"/>
    <property type="match status" value="1"/>
</dbReference>
<dbReference type="PANTHER" id="PTHR23037:SF45">
    <property type="entry name" value="INTERLEUKIN 13 RECEPTOR SUBUNIT ALPHA 2"/>
    <property type="match status" value="1"/>
</dbReference>
<dbReference type="Pfam" id="PF09240">
    <property type="entry name" value="IL6Ra-bind"/>
    <property type="match status" value="1"/>
</dbReference>
<dbReference type="SUPFAM" id="SSF49265">
    <property type="entry name" value="Fibronectin type III"/>
    <property type="match status" value="3"/>
</dbReference>
<dbReference type="PROSITE" id="PS50853">
    <property type="entry name" value="FN3"/>
    <property type="match status" value="3"/>
</dbReference>
<dbReference type="PROSITE" id="PS01356">
    <property type="entry name" value="HEMATOPO_REC_S_F2"/>
    <property type="match status" value="1"/>
</dbReference>
<protein>
    <recommendedName>
        <fullName>Interleukin-13 receptor subunit alpha-2</fullName>
        <shortName>IL-13 receptor subunit alpha-2</shortName>
        <shortName>IL-13R subunit alpha-2</shortName>
        <shortName>IL-13R-alpha-2</shortName>
        <shortName>IL-13RA2</shortName>
    </recommendedName>
    <cdAntigenName>CD213a2</cdAntigenName>
</protein>
<evidence type="ECO:0000250" key="1"/>
<evidence type="ECO:0000250" key="2">
    <source>
        <dbReference type="UniProtKB" id="Q14627"/>
    </source>
</evidence>
<evidence type="ECO:0000255" key="3"/>
<evidence type="ECO:0000255" key="4">
    <source>
        <dbReference type="PROSITE-ProRule" id="PRU00316"/>
    </source>
</evidence>
<evidence type="ECO:0000269" key="5">
    <source>
    </source>
</evidence>
<evidence type="ECO:0000305" key="6"/>
<gene>
    <name type="primary">IL13RA2</name>
</gene>
<keyword id="KW-1003">Cell membrane</keyword>
<keyword id="KW-1015">Disulfide bond</keyword>
<keyword id="KW-0325">Glycoprotein</keyword>
<keyword id="KW-0472">Membrane</keyword>
<keyword id="KW-0675">Receptor</keyword>
<keyword id="KW-1185">Reference proteome</keyword>
<keyword id="KW-0677">Repeat</keyword>
<keyword id="KW-0732">Signal</keyword>
<keyword id="KW-0812">Transmembrane</keyword>
<keyword id="KW-1133">Transmembrane helix</keyword>
<name>I13R2_CANLF</name>
<sequence>MAFIHLDVGFLYTLLVCTAFGSMLSNAEIKVNPPQDFEIVDPGYLGYLSLQWQPPLFPDNFKECTIEYELKYRNIDSENWKTIITKNLHYKDGFDLNKGIEAKINTLLPAQCTNGSEVRSSWAETTYWTSPQGNRETKIQDMDCVYYNWQYLVCSWKPGMGVHFDTNYQLFYWYEGLDHSAECTDYIKVNGKNMGCRFPYLESSDYKDFYICVNGSSESQPIRPSYFIFQLQNIVKPMPPDYLSLTVKNSEEINLKWNMPKGPIPAKCFIYEIEFTEDGTTWVTTTVENEIQITRTSNESQKLCFLVRSKVNIYCSDDGIWSEWSDEQCWKGDIWKETLVFFLIPFAFVSIFVLVITCLLLYKQRALLKTIFHTKKEVFSHQDTFC</sequence>
<feature type="signal peptide" evidence="3">
    <location>
        <begin position="1"/>
        <end position="21"/>
    </location>
</feature>
<feature type="chain" id="PRO_0000010941" description="Interleukin-13 receptor subunit alpha-2">
    <location>
        <begin position="22"/>
        <end position="386"/>
    </location>
</feature>
<feature type="topological domain" description="Extracellular" evidence="3">
    <location>
        <begin position="22"/>
        <end position="338"/>
    </location>
</feature>
<feature type="transmembrane region" description="Helical" evidence="3">
    <location>
        <begin position="339"/>
        <end position="359"/>
    </location>
</feature>
<feature type="topological domain" description="Cytoplasmic" evidence="3">
    <location>
        <begin position="360"/>
        <end position="386"/>
    </location>
</feature>
<feature type="domain" description="Fibronectin type-III 1" evidence="4">
    <location>
        <begin position="33"/>
        <end position="133"/>
    </location>
</feature>
<feature type="domain" description="Fibronectin type-III 2" evidence="4">
    <location>
        <begin position="138"/>
        <end position="234"/>
    </location>
</feature>
<feature type="domain" description="Fibronectin type-III 3" evidence="4">
    <location>
        <begin position="239"/>
        <end position="338"/>
    </location>
</feature>
<feature type="short sequence motif" description="WSXWS motif">
    <location>
        <begin position="321"/>
        <end position="325"/>
    </location>
</feature>
<feature type="glycosylation site" description="N-linked (GlcNAc...) asparagine" evidence="3">
    <location>
        <position position="114"/>
    </location>
</feature>
<feature type="glycosylation site" description="N-linked (GlcNAc...) asparagine" evidence="3">
    <location>
        <position position="214"/>
    </location>
</feature>
<feature type="glycosylation site" description="N-linked (GlcNAc...) asparagine" evidence="3">
    <location>
        <position position="298"/>
    </location>
</feature>
<feature type="disulfide bond" evidence="1">
    <location>
        <begin position="64"/>
        <end position="112"/>
    </location>
</feature>
<feature type="disulfide bond" evidence="1">
    <location>
        <begin position="144"/>
        <end position="154"/>
    </location>
</feature>
<feature type="disulfide bond" evidence="1">
    <location>
        <begin position="183"/>
        <end position="196"/>
    </location>
</feature>
<feature type="disulfide bond" evidence="1">
    <location>
        <begin position="268"/>
        <end position="315"/>
    </location>
</feature>